<accession>Q6CNY5</accession>
<comment type="function">
    <text evidence="1">Component of the Mediator complex, a coactivator involved in the regulated transcription of nearly all RNA polymerase II-dependent genes. Mediator functions as a bridge to convey information from gene-specific regulatory proteins to the basal RNA polymerase II transcription machinery. Mediator is recruited to promoters by direct interactions with regulatory proteins and serves as a scaffold for the assembly of a functional preinitiation complex with RNA polymerase II and the general transcription factors (By similarity).</text>
</comment>
<comment type="subunit">
    <text evidence="1">Component of the Mediator complex.</text>
</comment>
<comment type="subcellular location">
    <subcellularLocation>
        <location evidence="1">Nucleus</location>
    </subcellularLocation>
</comment>
<comment type="similarity">
    <text evidence="2">Belongs to the Mediator complex subunit 5 family.</text>
</comment>
<feature type="chain" id="PRO_0000302781" description="Mediator of RNA polymerase II transcription subunit 5">
    <location>
        <begin position="1"/>
        <end position="1067"/>
    </location>
</feature>
<evidence type="ECO:0000250" key="1"/>
<evidence type="ECO:0000305" key="2"/>
<name>MED5_KLULA</name>
<proteinExistence type="inferred from homology"/>
<gene>
    <name type="primary">NUT1</name>
    <name type="synonym">MED5</name>
    <name type="ordered locus">KLLA0E08943g</name>
</gene>
<dbReference type="EMBL" id="CR382125">
    <property type="protein sequence ID" value="CAG99441.1"/>
    <property type="molecule type" value="Genomic_DNA"/>
</dbReference>
<dbReference type="RefSeq" id="XP_454354.1">
    <property type="nucleotide sequence ID" value="XM_454354.1"/>
</dbReference>
<dbReference type="SMR" id="Q6CNY5"/>
<dbReference type="FunCoup" id="Q6CNY5">
    <property type="interactions" value="243"/>
</dbReference>
<dbReference type="STRING" id="284590.Q6CNY5"/>
<dbReference type="PaxDb" id="284590-Q6CNY5"/>
<dbReference type="KEGG" id="kla:KLLA0_E08977g"/>
<dbReference type="eggNOG" id="ENOG502R1HB">
    <property type="taxonomic scope" value="Eukaryota"/>
</dbReference>
<dbReference type="HOGENOM" id="CLU_281615_0_0_1"/>
<dbReference type="InParanoid" id="Q6CNY5"/>
<dbReference type="OMA" id="FTCFAQF"/>
<dbReference type="Proteomes" id="UP000000598">
    <property type="component" value="Chromosome E"/>
</dbReference>
<dbReference type="GO" id="GO:0016592">
    <property type="term" value="C:mediator complex"/>
    <property type="evidence" value="ECO:0007669"/>
    <property type="project" value="InterPro"/>
</dbReference>
<dbReference type="GO" id="GO:0003712">
    <property type="term" value="F:transcription coregulator activity"/>
    <property type="evidence" value="ECO:0007669"/>
    <property type="project" value="InterPro"/>
</dbReference>
<dbReference type="GO" id="GO:0006357">
    <property type="term" value="P:regulation of transcription by RNA polymerase II"/>
    <property type="evidence" value="ECO:0007669"/>
    <property type="project" value="InterPro"/>
</dbReference>
<dbReference type="InterPro" id="IPR014801">
    <property type="entry name" value="Mediator_Med5_fun"/>
</dbReference>
<dbReference type="PANTHER" id="PTHR35784">
    <property type="entry name" value="MEDIATOR OF RNA POLYMERASE II TRANSCRIPTION SUBUNIT 5"/>
    <property type="match status" value="1"/>
</dbReference>
<dbReference type="PANTHER" id="PTHR35784:SF1">
    <property type="entry name" value="MEDIATOR OF RNA POLYMERASE II TRANSCRIPTION SUBUNIT 5"/>
    <property type="match status" value="1"/>
</dbReference>
<dbReference type="Pfam" id="PF08689">
    <property type="entry name" value="Med5"/>
    <property type="match status" value="1"/>
</dbReference>
<protein>
    <recommendedName>
        <fullName>Mediator of RNA polymerase II transcription subunit 5</fullName>
    </recommendedName>
    <alternativeName>
        <fullName>Mediator complex subunit 5</fullName>
    </alternativeName>
</protein>
<keyword id="KW-0010">Activator</keyword>
<keyword id="KW-0539">Nucleus</keyword>
<keyword id="KW-1185">Reference proteome</keyword>
<keyword id="KW-0804">Transcription</keyword>
<keyword id="KW-0805">Transcription regulation</keyword>
<reference key="1">
    <citation type="journal article" date="2004" name="Nature">
        <title>Genome evolution in yeasts.</title>
        <authorList>
            <person name="Dujon B."/>
            <person name="Sherman D."/>
            <person name="Fischer G."/>
            <person name="Durrens P."/>
            <person name="Casaregola S."/>
            <person name="Lafontaine I."/>
            <person name="de Montigny J."/>
            <person name="Marck C."/>
            <person name="Neuveglise C."/>
            <person name="Talla E."/>
            <person name="Goffard N."/>
            <person name="Frangeul L."/>
            <person name="Aigle M."/>
            <person name="Anthouard V."/>
            <person name="Babour A."/>
            <person name="Barbe V."/>
            <person name="Barnay S."/>
            <person name="Blanchin S."/>
            <person name="Beckerich J.-M."/>
            <person name="Beyne E."/>
            <person name="Bleykasten C."/>
            <person name="Boisrame A."/>
            <person name="Boyer J."/>
            <person name="Cattolico L."/>
            <person name="Confanioleri F."/>
            <person name="de Daruvar A."/>
            <person name="Despons L."/>
            <person name="Fabre E."/>
            <person name="Fairhead C."/>
            <person name="Ferry-Dumazet H."/>
            <person name="Groppi A."/>
            <person name="Hantraye F."/>
            <person name="Hennequin C."/>
            <person name="Jauniaux N."/>
            <person name="Joyet P."/>
            <person name="Kachouri R."/>
            <person name="Kerrest A."/>
            <person name="Koszul R."/>
            <person name="Lemaire M."/>
            <person name="Lesur I."/>
            <person name="Ma L."/>
            <person name="Muller H."/>
            <person name="Nicaud J.-M."/>
            <person name="Nikolski M."/>
            <person name="Oztas S."/>
            <person name="Ozier-Kalogeropoulos O."/>
            <person name="Pellenz S."/>
            <person name="Potier S."/>
            <person name="Richard G.-F."/>
            <person name="Straub M.-L."/>
            <person name="Suleau A."/>
            <person name="Swennen D."/>
            <person name="Tekaia F."/>
            <person name="Wesolowski-Louvel M."/>
            <person name="Westhof E."/>
            <person name="Wirth B."/>
            <person name="Zeniou-Meyer M."/>
            <person name="Zivanovic Y."/>
            <person name="Bolotin-Fukuhara M."/>
            <person name="Thierry A."/>
            <person name="Bouchier C."/>
            <person name="Caudron B."/>
            <person name="Scarpelli C."/>
            <person name="Gaillardin C."/>
            <person name="Weissenbach J."/>
            <person name="Wincker P."/>
            <person name="Souciet J.-L."/>
        </authorList>
    </citation>
    <scope>NUCLEOTIDE SEQUENCE [LARGE SCALE GENOMIC DNA]</scope>
    <source>
        <strain>ATCC 8585 / CBS 2359 / DSM 70799 / NBRC 1267 / NRRL Y-1140 / WM37</strain>
    </source>
</reference>
<sequence>MESVSQLVSNCASRGIPAQQFLNFYHELINEKYGASLNAGNEERESESRKQVFEDVSRELVQAFHSSEDAILLAEYMVHLLFINYDTYLSSALLPQVYSIQSETLLMHFHSLAASFIGKLEDKLIKEQMRQDLSTFILSSCLQCDMSTFNNQLFISIVKYLQALLTLIDDSIDIEMDKDNLKLAVTSLLTRTTKLNRILGKRIGREFETKLNLSLSAKLAMVNSPQIFSPSSGATRFAGTPGSTKPMDLALSATSSTSNKIQDLKLIRFYKNLWLNNKIHHFNTSDSQLLEKFSSINSRLSSSLAEEHLIQEQITDLIETTYTSFAQLVNNKLYHQTNTNFNLLERKYVHFITKRLPLIIKDFLPQNPSVIVNSLQNIDEKVKKAIKSYYSNKNDSPERNEDLFDDYSGNNFDIRHDFLKNLIMLNLRPPSVLNEFLREDQMVDVKTLKTDDSLVIVNSQGVQEKVSDVQEALKSLIADLDIENQYVANGNNYRFSPDNALLKLLMSFDTIAPTKQVEIANAFLQILQKATDTSDLKTLGKVLWILTSNVGHSTTSMLCCISPGPFINAVVKFLEKQQRNSTVSSSDEPDFDSLHSYVTYGMALSFVVFLKTTYDFDIEPFIQNFEESYTLKFLSSIEDISDIFVLQNESAEGSKLYLQNWLRDLFINGSISDSQMKNTNVKDLINLIPFIFKQSVIAVQAGVVSNILNLTSGFEYFLQPFLMPGLIKIMFWLEYYLHSLKNNNPPSQILSSCWELINILICPPSLDDDAKGLHFMILKLNCVRLLNVLYLFRNDESNSSQYGVYAAHESIDPKLEAVISKLEYIASISNIYDVDTKCYETTKEVYSHGTLFSNKIPVTNEHPIDIIMTNQLNSFWNLHSSTYYNYDYLLELIKLITPEKFLVDSIRTLTYKVAAYGIPGVQGKLNTSAIEQVANFLAYFMILHDVQTEEQRLALLNYIESGVIVSKETETKQEPETKLDDDFDMLFGEPFNNTLDETSLVFSQNEQPKSYSSSVFPVLHDTFGVVIAEMKKRYDTSKNNGLLSEAAYENATTFIRKYVENLKNSVV</sequence>
<organism>
    <name type="scientific">Kluyveromyces lactis (strain ATCC 8585 / CBS 2359 / DSM 70799 / NBRC 1267 / NRRL Y-1140 / WM37)</name>
    <name type="common">Yeast</name>
    <name type="synonym">Candida sphaerica</name>
    <dbReference type="NCBI Taxonomy" id="284590"/>
    <lineage>
        <taxon>Eukaryota</taxon>
        <taxon>Fungi</taxon>
        <taxon>Dikarya</taxon>
        <taxon>Ascomycota</taxon>
        <taxon>Saccharomycotina</taxon>
        <taxon>Saccharomycetes</taxon>
        <taxon>Saccharomycetales</taxon>
        <taxon>Saccharomycetaceae</taxon>
        <taxon>Kluyveromyces</taxon>
    </lineage>
</organism>